<gene>
    <name evidence="1" type="primary">glpK</name>
    <name type="ordered locus">CBUD_1141</name>
</gene>
<comment type="function">
    <text evidence="1">Key enzyme in the regulation of glycerol uptake and metabolism. Catalyzes the phosphorylation of glycerol to yield sn-glycerol 3-phosphate.</text>
</comment>
<comment type="catalytic activity">
    <reaction evidence="1">
        <text>glycerol + ATP = sn-glycerol 3-phosphate + ADP + H(+)</text>
        <dbReference type="Rhea" id="RHEA:21644"/>
        <dbReference type="ChEBI" id="CHEBI:15378"/>
        <dbReference type="ChEBI" id="CHEBI:17754"/>
        <dbReference type="ChEBI" id="CHEBI:30616"/>
        <dbReference type="ChEBI" id="CHEBI:57597"/>
        <dbReference type="ChEBI" id="CHEBI:456216"/>
        <dbReference type="EC" id="2.7.1.30"/>
    </reaction>
</comment>
<comment type="activity regulation">
    <text evidence="1">Inhibited by fructose 1,6-bisphosphate (FBP).</text>
</comment>
<comment type="pathway">
    <text evidence="1">Polyol metabolism; glycerol degradation via glycerol kinase pathway; sn-glycerol 3-phosphate from glycerol: step 1/1.</text>
</comment>
<comment type="similarity">
    <text evidence="1">Belongs to the FGGY kinase family.</text>
</comment>
<comment type="sequence caution" evidence="2">
    <conflict type="erroneous initiation">
        <sequence resource="EMBL-CDS" id="ABS77936"/>
    </conflict>
    <text>Extended N-terminus.</text>
</comment>
<protein>
    <recommendedName>
        <fullName evidence="1">Glycerol kinase</fullName>
        <ecNumber evidence="1">2.7.1.30</ecNumber>
    </recommendedName>
    <alternativeName>
        <fullName evidence="1">ATP:glycerol 3-phosphotransferase</fullName>
    </alternativeName>
    <alternativeName>
        <fullName evidence="1">Glycerokinase</fullName>
        <shortName evidence="1">GK</shortName>
    </alternativeName>
</protein>
<dbReference type="EC" id="2.7.1.30" evidence="1"/>
<dbReference type="EMBL" id="CP000733">
    <property type="protein sequence ID" value="ABS77936.2"/>
    <property type="status" value="ALT_INIT"/>
    <property type="molecule type" value="Genomic_DNA"/>
</dbReference>
<dbReference type="SMR" id="A9KCL1"/>
<dbReference type="KEGG" id="cbd:CBUD_1141"/>
<dbReference type="HOGENOM" id="CLU_009281_2_3_6"/>
<dbReference type="UniPathway" id="UPA00618">
    <property type="reaction ID" value="UER00672"/>
</dbReference>
<dbReference type="Proteomes" id="UP000008555">
    <property type="component" value="Chromosome"/>
</dbReference>
<dbReference type="GO" id="GO:0005829">
    <property type="term" value="C:cytosol"/>
    <property type="evidence" value="ECO:0007669"/>
    <property type="project" value="TreeGrafter"/>
</dbReference>
<dbReference type="GO" id="GO:0005524">
    <property type="term" value="F:ATP binding"/>
    <property type="evidence" value="ECO:0007669"/>
    <property type="project" value="UniProtKB-UniRule"/>
</dbReference>
<dbReference type="GO" id="GO:0004370">
    <property type="term" value="F:glycerol kinase activity"/>
    <property type="evidence" value="ECO:0000250"/>
    <property type="project" value="UniProtKB"/>
</dbReference>
<dbReference type="GO" id="GO:0019563">
    <property type="term" value="P:glycerol catabolic process"/>
    <property type="evidence" value="ECO:0007669"/>
    <property type="project" value="UniProtKB-UniRule"/>
</dbReference>
<dbReference type="GO" id="GO:0006071">
    <property type="term" value="P:glycerol metabolic process"/>
    <property type="evidence" value="ECO:0000250"/>
    <property type="project" value="UniProtKB"/>
</dbReference>
<dbReference type="GO" id="GO:0006072">
    <property type="term" value="P:glycerol-3-phosphate metabolic process"/>
    <property type="evidence" value="ECO:0007669"/>
    <property type="project" value="InterPro"/>
</dbReference>
<dbReference type="CDD" id="cd07786">
    <property type="entry name" value="FGGY_EcGK_like"/>
    <property type="match status" value="1"/>
</dbReference>
<dbReference type="FunFam" id="3.30.420.40:FF:000007">
    <property type="entry name" value="Glycerol kinase"/>
    <property type="match status" value="1"/>
</dbReference>
<dbReference type="FunFam" id="3.30.420.40:FF:000177">
    <property type="entry name" value="Glycerol kinase"/>
    <property type="match status" value="1"/>
</dbReference>
<dbReference type="Gene3D" id="3.30.420.40">
    <property type="match status" value="2"/>
</dbReference>
<dbReference type="HAMAP" id="MF_00186">
    <property type="entry name" value="Glycerol_kin"/>
    <property type="match status" value="1"/>
</dbReference>
<dbReference type="InterPro" id="IPR043129">
    <property type="entry name" value="ATPase_NBD"/>
</dbReference>
<dbReference type="InterPro" id="IPR000577">
    <property type="entry name" value="Carb_kinase_FGGY"/>
</dbReference>
<dbReference type="InterPro" id="IPR018483">
    <property type="entry name" value="Carb_kinase_FGGY_CS"/>
</dbReference>
<dbReference type="InterPro" id="IPR018485">
    <property type="entry name" value="FGGY_C"/>
</dbReference>
<dbReference type="InterPro" id="IPR018484">
    <property type="entry name" value="FGGY_N"/>
</dbReference>
<dbReference type="InterPro" id="IPR005999">
    <property type="entry name" value="Glycerol_kin"/>
</dbReference>
<dbReference type="NCBIfam" id="TIGR01311">
    <property type="entry name" value="glycerol_kin"/>
    <property type="match status" value="1"/>
</dbReference>
<dbReference type="NCBIfam" id="NF000756">
    <property type="entry name" value="PRK00047.1"/>
    <property type="match status" value="1"/>
</dbReference>
<dbReference type="PANTHER" id="PTHR10196:SF78">
    <property type="entry name" value="GLYCEROL KINASE"/>
    <property type="match status" value="1"/>
</dbReference>
<dbReference type="PANTHER" id="PTHR10196">
    <property type="entry name" value="SUGAR KINASE"/>
    <property type="match status" value="1"/>
</dbReference>
<dbReference type="Pfam" id="PF02782">
    <property type="entry name" value="FGGY_C"/>
    <property type="match status" value="1"/>
</dbReference>
<dbReference type="Pfam" id="PF00370">
    <property type="entry name" value="FGGY_N"/>
    <property type="match status" value="1"/>
</dbReference>
<dbReference type="PIRSF" id="PIRSF000538">
    <property type="entry name" value="GlpK"/>
    <property type="match status" value="1"/>
</dbReference>
<dbReference type="SUPFAM" id="SSF53067">
    <property type="entry name" value="Actin-like ATPase domain"/>
    <property type="match status" value="2"/>
</dbReference>
<dbReference type="PROSITE" id="PS00933">
    <property type="entry name" value="FGGY_KINASES_1"/>
    <property type="match status" value="1"/>
</dbReference>
<dbReference type="PROSITE" id="PS00445">
    <property type="entry name" value="FGGY_KINASES_2"/>
    <property type="match status" value="1"/>
</dbReference>
<organism>
    <name type="scientific">Coxiella burnetii (strain Dugway 5J108-111)</name>
    <dbReference type="NCBI Taxonomy" id="434922"/>
    <lineage>
        <taxon>Bacteria</taxon>
        <taxon>Pseudomonadati</taxon>
        <taxon>Pseudomonadota</taxon>
        <taxon>Gammaproteobacteria</taxon>
        <taxon>Legionellales</taxon>
        <taxon>Coxiellaceae</taxon>
        <taxon>Coxiella</taxon>
    </lineage>
</organism>
<proteinExistence type="inferred from homology"/>
<sequence length="501" mass="55387">MSSFILAIDQGTTSTRAILFNEEAKLVHYHHVEITQYFPQGGWVEHDPEEIWDSTLLCCRNVLEEASLRAADIAALGISNQRETTILWDRHTGQPLYRAIGWQDRRTVNFCEQLASQAGVLAKFVEKTGLILDPYFSCSKIKWILDNIKGAYEKAKRGELAFGTVDSYLLWKFTGGKCHATDATNASRTGLFNINQQRWDDELLTLFDIPKSLLPTVLDNCAQFGFTDLDLLGHKIPITAMIGDQQAAAVGQACIKPGMVKSTYGTGCFMLLNTGDQIIHSRNRLLATIAYRLNDTVTYGLEGSIFIAGAAVKWLRDPLHLIEKANDSESMASSVEDTGGVYLVPAFTGLGAPYWDPNARGALFGLTRNTQREHIVRAALEAVCYQSKDLVRAILNDGANLTTLRVDGGMAANNWLLQFLSDILGVNVDRSRCIESSALGTAFLAGLGAGLFDSLEEMTGLWQADRHFIPQMDPKKREELYDGWQKAVEKTLTPAAPLLFP</sequence>
<feature type="chain" id="PRO_1000077415" description="Glycerol kinase">
    <location>
        <begin position="1"/>
        <end position="501"/>
    </location>
</feature>
<feature type="binding site" evidence="1">
    <location>
        <position position="12"/>
    </location>
    <ligand>
        <name>ADP</name>
        <dbReference type="ChEBI" id="CHEBI:456216"/>
    </ligand>
</feature>
<feature type="binding site" evidence="1">
    <location>
        <position position="12"/>
    </location>
    <ligand>
        <name>ATP</name>
        <dbReference type="ChEBI" id="CHEBI:30616"/>
    </ligand>
</feature>
<feature type="binding site" evidence="1">
    <location>
        <position position="12"/>
    </location>
    <ligand>
        <name>sn-glycerol 3-phosphate</name>
        <dbReference type="ChEBI" id="CHEBI:57597"/>
    </ligand>
</feature>
<feature type="binding site" evidence="1">
    <location>
        <position position="13"/>
    </location>
    <ligand>
        <name>ATP</name>
        <dbReference type="ChEBI" id="CHEBI:30616"/>
    </ligand>
</feature>
<feature type="binding site" evidence="1">
    <location>
        <position position="14"/>
    </location>
    <ligand>
        <name>ATP</name>
        <dbReference type="ChEBI" id="CHEBI:30616"/>
    </ligand>
</feature>
<feature type="binding site" evidence="1">
    <location>
        <position position="16"/>
    </location>
    <ligand>
        <name>ADP</name>
        <dbReference type="ChEBI" id="CHEBI:456216"/>
    </ligand>
</feature>
<feature type="binding site" evidence="1">
    <location>
        <position position="82"/>
    </location>
    <ligand>
        <name>glycerol</name>
        <dbReference type="ChEBI" id="CHEBI:17754"/>
    </ligand>
</feature>
<feature type="binding site" evidence="1">
    <location>
        <position position="82"/>
    </location>
    <ligand>
        <name>sn-glycerol 3-phosphate</name>
        <dbReference type="ChEBI" id="CHEBI:57597"/>
    </ligand>
</feature>
<feature type="binding site" evidence="1">
    <location>
        <position position="83"/>
    </location>
    <ligand>
        <name>glycerol</name>
        <dbReference type="ChEBI" id="CHEBI:17754"/>
    </ligand>
</feature>
<feature type="binding site" evidence="1">
    <location>
        <position position="83"/>
    </location>
    <ligand>
        <name>sn-glycerol 3-phosphate</name>
        <dbReference type="ChEBI" id="CHEBI:57597"/>
    </ligand>
</feature>
<feature type="binding site" evidence="1">
    <location>
        <position position="135"/>
    </location>
    <ligand>
        <name>glycerol</name>
        <dbReference type="ChEBI" id="CHEBI:17754"/>
    </ligand>
</feature>
<feature type="binding site" evidence="1">
    <location>
        <position position="135"/>
    </location>
    <ligand>
        <name>sn-glycerol 3-phosphate</name>
        <dbReference type="ChEBI" id="CHEBI:57597"/>
    </ligand>
</feature>
<feature type="binding site" evidence="1">
    <location>
        <position position="244"/>
    </location>
    <ligand>
        <name>glycerol</name>
        <dbReference type="ChEBI" id="CHEBI:17754"/>
    </ligand>
</feature>
<feature type="binding site" evidence="1">
    <location>
        <position position="244"/>
    </location>
    <ligand>
        <name>sn-glycerol 3-phosphate</name>
        <dbReference type="ChEBI" id="CHEBI:57597"/>
    </ligand>
</feature>
<feature type="binding site" evidence="1">
    <location>
        <position position="245"/>
    </location>
    <ligand>
        <name>glycerol</name>
        <dbReference type="ChEBI" id="CHEBI:17754"/>
    </ligand>
</feature>
<feature type="binding site" evidence="1">
    <location>
        <position position="266"/>
    </location>
    <ligand>
        <name>ADP</name>
        <dbReference type="ChEBI" id="CHEBI:456216"/>
    </ligand>
</feature>
<feature type="binding site" evidence="1">
    <location>
        <position position="266"/>
    </location>
    <ligand>
        <name>ATP</name>
        <dbReference type="ChEBI" id="CHEBI:30616"/>
    </ligand>
</feature>
<feature type="binding site" evidence="1">
    <location>
        <position position="309"/>
    </location>
    <ligand>
        <name>ADP</name>
        <dbReference type="ChEBI" id="CHEBI:456216"/>
    </ligand>
</feature>
<feature type="binding site" evidence="1">
    <location>
        <position position="309"/>
    </location>
    <ligand>
        <name>ATP</name>
        <dbReference type="ChEBI" id="CHEBI:30616"/>
    </ligand>
</feature>
<feature type="binding site" evidence="1">
    <location>
        <position position="409"/>
    </location>
    <ligand>
        <name>ADP</name>
        <dbReference type="ChEBI" id="CHEBI:456216"/>
    </ligand>
</feature>
<feature type="binding site" evidence="1">
    <location>
        <position position="409"/>
    </location>
    <ligand>
        <name>ATP</name>
        <dbReference type="ChEBI" id="CHEBI:30616"/>
    </ligand>
</feature>
<feature type="binding site" evidence="1">
    <location>
        <position position="413"/>
    </location>
    <ligand>
        <name>ADP</name>
        <dbReference type="ChEBI" id="CHEBI:456216"/>
    </ligand>
</feature>
<accession>A9KCL1</accession>
<evidence type="ECO:0000255" key="1">
    <source>
        <dbReference type="HAMAP-Rule" id="MF_00186"/>
    </source>
</evidence>
<evidence type="ECO:0000305" key="2"/>
<reference key="1">
    <citation type="journal article" date="2009" name="Infect. Immun.">
        <title>Comparative genomics reveal extensive transposon-mediated genomic plasticity and diversity among potential effector proteins within the genus Coxiella.</title>
        <authorList>
            <person name="Beare P.A."/>
            <person name="Unsworth N."/>
            <person name="Andoh M."/>
            <person name="Voth D.E."/>
            <person name="Omsland A."/>
            <person name="Gilk S.D."/>
            <person name="Williams K.P."/>
            <person name="Sobral B.W."/>
            <person name="Kupko J.J. III"/>
            <person name="Porcella S.F."/>
            <person name="Samuel J.E."/>
            <person name="Heinzen R.A."/>
        </authorList>
    </citation>
    <scope>NUCLEOTIDE SEQUENCE [LARGE SCALE GENOMIC DNA]</scope>
    <source>
        <strain>Dugway 5J108-111</strain>
    </source>
</reference>
<keyword id="KW-0067">ATP-binding</keyword>
<keyword id="KW-0319">Glycerol metabolism</keyword>
<keyword id="KW-0418">Kinase</keyword>
<keyword id="KW-0547">Nucleotide-binding</keyword>
<keyword id="KW-0808">Transferase</keyword>
<name>GLPK_COXBN</name>